<organism>
    <name type="scientific">Hydrogenovibrio crunogenus (strain DSM 25203 / XCL-2)</name>
    <name type="common">Thiomicrospira crunogena</name>
    <dbReference type="NCBI Taxonomy" id="317025"/>
    <lineage>
        <taxon>Bacteria</taxon>
        <taxon>Pseudomonadati</taxon>
        <taxon>Pseudomonadota</taxon>
        <taxon>Gammaproteobacteria</taxon>
        <taxon>Thiotrichales</taxon>
        <taxon>Piscirickettsiaceae</taxon>
        <taxon>Hydrogenovibrio</taxon>
    </lineage>
</organism>
<sequence length="294" mass="32277">MAWIQINTTVSEALAEPLSDAFMEVNAASVTFADAKDQPIFEPEIGTTPIWSQTKVIGLFDAEADIPAVINQLATLIPDVPAERYNIEALEDKDWIRAWMDQFQPMQFGSRLWIVPSWCDTPDPKAVNLMLDPGMAFGTGTHPTTALCLTWLDQNPPTDLTVIDYGCGSGVLALAAEKLGAKHVKGTDIDPQAIIASQQNADRNNANIEFKLVKEFQSEPVDLLIANILAGPLKALAPEFIRLMKPNATLILSGLLTNQAADLIAFYQQQGFEFLAQNDLDEWSQLSFTKQVTS</sequence>
<gene>
    <name evidence="1" type="primary">prmA</name>
    <name type="ordered locus">Tcr_0442</name>
</gene>
<comment type="function">
    <text evidence="1">Methylates ribosomal protein L11.</text>
</comment>
<comment type="catalytic activity">
    <reaction evidence="1">
        <text>L-lysyl-[protein] + 3 S-adenosyl-L-methionine = N(6),N(6),N(6)-trimethyl-L-lysyl-[protein] + 3 S-adenosyl-L-homocysteine + 3 H(+)</text>
        <dbReference type="Rhea" id="RHEA:54192"/>
        <dbReference type="Rhea" id="RHEA-COMP:9752"/>
        <dbReference type="Rhea" id="RHEA-COMP:13826"/>
        <dbReference type="ChEBI" id="CHEBI:15378"/>
        <dbReference type="ChEBI" id="CHEBI:29969"/>
        <dbReference type="ChEBI" id="CHEBI:57856"/>
        <dbReference type="ChEBI" id="CHEBI:59789"/>
        <dbReference type="ChEBI" id="CHEBI:61961"/>
    </reaction>
</comment>
<comment type="subcellular location">
    <subcellularLocation>
        <location evidence="1">Cytoplasm</location>
    </subcellularLocation>
</comment>
<comment type="similarity">
    <text evidence="1">Belongs to the methyltransferase superfamily. PrmA family.</text>
</comment>
<feature type="chain" id="PRO_1000046118" description="Ribosomal protein L11 methyltransferase">
    <location>
        <begin position="1"/>
        <end position="294"/>
    </location>
</feature>
<feature type="binding site" evidence="1">
    <location>
        <position position="145"/>
    </location>
    <ligand>
        <name>S-adenosyl-L-methionine</name>
        <dbReference type="ChEBI" id="CHEBI:59789"/>
    </ligand>
</feature>
<feature type="binding site" evidence="1">
    <location>
        <position position="166"/>
    </location>
    <ligand>
        <name>S-adenosyl-L-methionine</name>
        <dbReference type="ChEBI" id="CHEBI:59789"/>
    </ligand>
</feature>
<feature type="binding site" evidence="1">
    <location>
        <position position="188"/>
    </location>
    <ligand>
        <name>S-adenosyl-L-methionine</name>
        <dbReference type="ChEBI" id="CHEBI:59789"/>
    </ligand>
</feature>
<feature type="binding site" evidence="1">
    <location>
        <position position="227"/>
    </location>
    <ligand>
        <name>S-adenosyl-L-methionine</name>
        <dbReference type="ChEBI" id="CHEBI:59789"/>
    </ligand>
</feature>
<name>PRMA_HYDCU</name>
<dbReference type="EC" id="2.1.1.-" evidence="1"/>
<dbReference type="EMBL" id="CP000109">
    <property type="protein sequence ID" value="ABB41038.1"/>
    <property type="molecule type" value="Genomic_DNA"/>
</dbReference>
<dbReference type="SMR" id="Q31II5"/>
<dbReference type="STRING" id="317025.Tcr_0442"/>
<dbReference type="KEGG" id="tcx:Tcr_0442"/>
<dbReference type="eggNOG" id="COG2264">
    <property type="taxonomic scope" value="Bacteria"/>
</dbReference>
<dbReference type="HOGENOM" id="CLU_049382_4_1_6"/>
<dbReference type="OrthoDB" id="9785995at2"/>
<dbReference type="GO" id="GO:0005829">
    <property type="term" value="C:cytosol"/>
    <property type="evidence" value="ECO:0007669"/>
    <property type="project" value="TreeGrafter"/>
</dbReference>
<dbReference type="GO" id="GO:0016279">
    <property type="term" value="F:protein-lysine N-methyltransferase activity"/>
    <property type="evidence" value="ECO:0007669"/>
    <property type="project" value="TreeGrafter"/>
</dbReference>
<dbReference type="GO" id="GO:0032259">
    <property type="term" value="P:methylation"/>
    <property type="evidence" value="ECO:0007669"/>
    <property type="project" value="UniProtKB-KW"/>
</dbReference>
<dbReference type="CDD" id="cd02440">
    <property type="entry name" value="AdoMet_MTases"/>
    <property type="match status" value="1"/>
</dbReference>
<dbReference type="Gene3D" id="3.40.50.150">
    <property type="entry name" value="Vaccinia Virus protein VP39"/>
    <property type="match status" value="1"/>
</dbReference>
<dbReference type="HAMAP" id="MF_00735">
    <property type="entry name" value="Methyltr_PrmA"/>
    <property type="match status" value="1"/>
</dbReference>
<dbReference type="InterPro" id="IPR050078">
    <property type="entry name" value="Ribosomal_L11_MeTrfase_PrmA"/>
</dbReference>
<dbReference type="InterPro" id="IPR004498">
    <property type="entry name" value="Ribosomal_PrmA_MeTrfase"/>
</dbReference>
<dbReference type="InterPro" id="IPR029063">
    <property type="entry name" value="SAM-dependent_MTases_sf"/>
</dbReference>
<dbReference type="NCBIfam" id="TIGR00406">
    <property type="entry name" value="prmA"/>
    <property type="match status" value="1"/>
</dbReference>
<dbReference type="PANTHER" id="PTHR43648">
    <property type="entry name" value="ELECTRON TRANSFER FLAVOPROTEIN BETA SUBUNIT LYSINE METHYLTRANSFERASE"/>
    <property type="match status" value="1"/>
</dbReference>
<dbReference type="PANTHER" id="PTHR43648:SF1">
    <property type="entry name" value="ELECTRON TRANSFER FLAVOPROTEIN BETA SUBUNIT LYSINE METHYLTRANSFERASE"/>
    <property type="match status" value="1"/>
</dbReference>
<dbReference type="Pfam" id="PF06325">
    <property type="entry name" value="PrmA"/>
    <property type="match status" value="1"/>
</dbReference>
<dbReference type="PIRSF" id="PIRSF000401">
    <property type="entry name" value="RPL11_MTase"/>
    <property type="match status" value="1"/>
</dbReference>
<dbReference type="SUPFAM" id="SSF53335">
    <property type="entry name" value="S-adenosyl-L-methionine-dependent methyltransferases"/>
    <property type="match status" value="1"/>
</dbReference>
<reference key="1">
    <citation type="journal article" date="2006" name="PLoS Biol.">
        <title>The genome of deep-sea vent chemolithoautotroph Thiomicrospira crunogena XCL-2.</title>
        <authorList>
            <person name="Scott K.M."/>
            <person name="Sievert S.M."/>
            <person name="Abril F.N."/>
            <person name="Ball L.A."/>
            <person name="Barrett C.J."/>
            <person name="Blake R.A."/>
            <person name="Boller A.J."/>
            <person name="Chain P.S.G."/>
            <person name="Clark J.A."/>
            <person name="Davis C.R."/>
            <person name="Detter C."/>
            <person name="Do K.F."/>
            <person name="Dobrinski K.P."/>
            <person name="Faza B.I."/>
            <person name="Fitzpatrick K.A."/>
            <person name="Freyermuth S.K."/>
            <person name="Harmer T.L."/>
            <person name="Hauser L.J."/>
            <person name="Huegler M."/>
            <person name="Kerfeld C.A."/>
            <person name="Klotz M.G."/>
            <person name="Kong W.W."/>
            <person name="Land M."/>
            <person name="Lapidus A."/>
            <person name="Larimer F.W."/>
            <person name="Longo D.L."/>
            <person name="Lucas S."/>
            <person name="Malfatti S.A."/>
            <person name="Massey S.E."/>
            <person name="Martin D.D."/>
            <person name="McCuddin Z."/>
            <person name="Meyer F."/>
            <person name="Moore J.L."/>
            <person name="Ocampo L.H. Jr."/>
            <person name="Paul J.H."/>
            <person name="Paulsen I.T."/>
            <person name="Reep D.K."/>
            <person name="Ren Q."/>
            <person name="Ross R.L."/>
            <person name="Sato P.Y."/>
            <person name="Thomas P."/>
            <person name="Tinkham L.E."/>
            <person name="Zeruth G.T."/>
        </authorList>
    </citation>
    <scope>NUCLEOTIDE SEQUENCE [LARGE SCALE GENOMIC DNA]</scope>
    <source>
        <strain>DSM 25203 / XCL-2</strain>
    </source>
</reference>
<evidence type="ECO:0000255" key="1">
    <source>
        <dbReference type="HAMAP-Rule" id="MF_00735"/>
    </source>
</evidence>
<accession>Q31II5</accession>
<proteinExistence type="inferred from homology"/>
<keyword id="KW-0963">Cytoplasm</keyword>
<keyword id="KW-0489">Methyltransferase</keyword>
<keyword id="KW-0949">S-adenosyl-L-methionine</keyword>
<keyword id="KW-0808">Transferase</keyword>
<protein>
    <recommendedName>
        <fullName evidence="1">Ribosomal protein L11 methyltransferase</fullName>
        <shortName evidence="1">L11 Mtase</shortName>
        <ecNumber evidence="1">2.1.1.-</ecNumber>
    </recommendedName>
</protein>